<comment type="function">
    <text evidence="1">Responsible for the release of ribosomes from messenger RNA at the termination of protein biosynthesis. May increase the efficiency of translation by recycling ribosomes from one round of translation to another.</text>
</comment>
<comment type="subcellular location">
    <subcellularLocation>
        <location evidence="1">Cytoplasm</location>
    </subcellularLocation>
</comment>
<comment type="similarity">
    <text evidence="1">Belongs to the RRF family.</text>
</comment>
<sequence length="186" mass="20807">MSVADIKKGVEQKMQRSIEAFKNDLAKIRTGRAHTGLLDHVQVDYYGSMVPISQVANLTLVDARTIGVQPWEKNMVAKVEKAIREADLGLNPATAGDLIRVPMPPLTEERRRELTKVVKGEGETAKVAIRNLRRDANEALKKLVKDKEISEDDERRAGDDVQKLTDKHVAEIDKLVQTKEAEIMTV</sequence>
<dbReference type="EMBL" id="CP000868">
    <property type="protein sequence ID" value="ABX14948.1"/>
    <property type="molecule type" value="Genomic_DNA"/>
</dbReference>
<dbReference type="EMBL" id="AP009385">
    <property type="protein sequence ID" value="BAG43904.1"/>
    <property type="molecule type" value="Genomic_DNA"/>
</dbReference>
<dbReference type="RefSeq" id="WP_006402649.1">
    <property type="nucleotide sequence ID" value="NC_010804.1"/>
</dbReference>
<dbReference type="SMR" id="A9AIL7"/>
<dbReference type="STRING" id="395019.BMULJ_01987"/>
<dbReference type="GeneID" id="89570464"/>
<dbReference type="KEGG" id="bmj:BMULJ_01987"/>
<dbReference type="KEGG" id="bmu:Bmul_1260"/>
<dbReference type="eggNOG" id="COG0233">
    <property type="taxonomic scope" value="Bacteria"/>
</dbReference>
<dbReference type="HOGENOM" id="CLU_073981_2_1_4"/>
<dbReference type="Proteomes" id="UP000008815">
    <property type="component" value="Chromosome 1"/>
</dbReference>
<dbReference type="GO" id="GO:0005829">
    <property type="term" value="C:cytosol"/>
    <property type="evidence" value="ECO:0007669"/>
    <property type="project" value="GOC"/>
</dbReference>
<dbReference type="GO" id="GO:0043023">
    <property type="term" value="F:ribosomal large subunit binding"/>
    <property type="evidence" value="ECO:0007669"/>
    <property type="project" value="TreeGrafter"/>
</dbReference>
<dbReference type="GO" id="GO:0002184">
    <property type="term" value="P:cytoplasmic translational termination"/>
    <property type="evidence" value="ECO:0007669"/>
    <property type="project" value="TreeGrafter"/>
</dbReference>
<dbReference type="CDD" id="cd00520">
    <property type="entry name" value="RRF"/>
    <property type="match status" value="1"/>
</dbReference>
<dbReference type="FunFam" id="1.10.132.20:FF:000001">
    <property type="entry name" value="Ribosome-recycling factor"/>
    <property type="match status" value="1"/>
</dbReference>
<dbReference type="FunFam" id="3.30.1360.40:FF:000001">
    <property type="entry name" value="Ribosome-recycling factor"/>
    <property type="match status" value="1"/>
</dbReference>
<dbReference type="Gene3D" id="3.30.1360.40">
    <property type="match status" value="1"/>
</dbReference>
<dbReference type="Gene3D" id="1.10.132.20">
    <property type="entry name" value="Ribosome-recycling factor"/>
    <property type="match status" value="1"/>
</dbReference>
<dbReference type="HAMAP" id="MF_00040">
    <property type="entry name" value="RRF"/>
    <property type="match status" value="1"/>
</dbReference>
<dbReference type="InterPro" id="IPR002661">
    <property type="entry name" value="Ribosome_recyc_fac"/>
</dbReference>
<dbReference type="InterPro" id="IPR023584">
    <property type="entry name" value="Ribosome_recyc_fac_dom"/>
</dbReference>
<dbReference type="InterPro" id="IPR036191">
    <property type="entry name" value="RRF_sf"/>
</dbReference>
<dbReference type="NCBIfam" id="TIGR00496">
    <property type="entry name" value="frr"/>
    <property type="match status" value="1"/>
</dbReference>
<dbReference type="PANTHER" id="PTHR20982:SF3">
    <property type="entry name" value="MITOCHONDRIAL RIBOSOME RECYCLING FACTOR PSEUDO 1"/>
    <property type="match status" value="1"/>
</dbReference>
<dbReference type="PANTHER" id="PTHR20982">
    <property type="entry name" value="RIBOSOME RECYCLING FACTOR"/>
    <property type="match status" value="1"/>
</dbReference>
<dbReference type="Pfam" id="PF01765">
    <property type="entry name" value="RRF"/>
    <property type="match status" value="1"/>
</dbReference>
<dbReference type="SUPFAM" id="SSF55194">
    <property type="entry name" value="Ribosome recycling factor, RRF"/>
    <property type="match status" value="1"/>
</dbReference>
<reference key="1">
    <citation type="submission" date="2007-10" db="EMBL/GenBank/DDBJ databases">
        <title>Complete sequence of chromosome 1 of Burkholderia multivorans ATCC 17616.</title>
        <authorList>
            <person name="Copeland A."/>
            <person name="Lucas S."/>
            <person name="Lapidus A."/>
            <person name="Barry K."/>
            <person name="Glavina del Rio T."/>
            <person name="Dalin E."/>
            <person name="Tice H."/>
            <person name="Pitluck S."/>
            <person name="Chain P."/>
            <person name="Malfatti S."/>
            <person name="Shin M."/>
            <person name="Vergez L."/>
            <person name="Schmutz J."/>
            <person name="Larimer F."/>
            <person name="Land M."/>
            <person name="Hauser L."/>
            <person name="Kyrpides N."/>
            <person name="Kim E."/>
            <person name="Tiedje J."/>
            <person name="Richardson P."/>
        </authorList>
    </citation>
    <scope>NUCLEOTIDE SEQUENCE [LARGE SCALE GENOMIC DNA]</scope>
    <source>
        <strain>ATCC 17616 / 249</strain>
    </source>
</reference>
<reference key="2">
    <citation type="submission" date="2007-04" db="EMBL/GenBank/DDBJ databases">
        <title>Complete genome sequence of Burkholderia multivorans ATCC 17616.</title>
        <authorList>
            <person name="Ohtsubo Y."/>
            <person name="Yamashita A."/>
            <person name="Kurokawa K."/>
            <person name="Takami H."/>
            <person name="Yuhara S."/>
            <person name="Nishiyama E."/>
            <person name="Endo R."/>
            <person name="Miyazaki R."/>
            <person name="Ono A."/>
            <person name="Yano K."/>
            <person name="Ito M."/>
            <person name="Sota M."/>
            <person name="Yuji N."/>
            <person name="Hattori M."/>
            <person name="Tsuda M."/>
        </authorList>
    </citation>
    <scope>NUCLEOTIDE SEQUENCE [LARGE SCALE GENOMIC DNA]</scope>
    <source>
        <strain>ATCC 17616 / 249</strain>
    </source>
</reference>
<name>RRF_BURM1</name>
<evidence type="ECO:0000255" key="1">
    <source>
        <dbReference type="HAMAP-Rule" id="MF_00040"/>
    </source>
</evidence>
<keyword id="KW-0963">Cytoplasm</keyword>
<keyword id="KW-0648">Protein biosynthesis</keyword>
<keyword id="KW-1185">Reference proteome</keyword>
<accession>A9AIL7</accession>
<proteinExistence type="inferred from homology"/>
<feature type="chain" id="PRO_1000090718" description="Ribosome-recycling factor">
    <location>
        <begin position="1"/>
        <end position="186"/>
    </location>
</feature>
<protein>
    <recommendedName>
        <fullName evidence="1">Ribosome-recycling factor</fullName>
        <shortName evidence="1">RRF</shortName>
    </recommendedName>
    <alternativeName>
        <fullName evidence="1">Ribosome-releasing factor</fullName>
    </alternativeName>
</protein>
<gene>
    <name evidence="1" type="primary">frr</name>
    <name type="ordered locus">Bmul_1260</name>
    <name type="ordered locus">BMULJ_01987</name>
</gene>
<organism>
    <name type="scientific">Burkholderia multivorans (strain ATCC 17616 / 249)</name>
    <dbReference type="NCBI Taxonomy" id="395019"/>
    <lineage>
        <taxon>Bacteria</taxon>
        <taxon>Pseudomonadati</taxon>
        <taxon>Pseudomonadota</taxon>
        <taxon>Betaproteobacteria</taxon>
        <taxon>Burkholderiales</taxon>
        <taxon>Burkholderiaceae</taxon>
        <taxon>Burkholderia</taxon>
        <taxon>Burkholderia cepacia complex</taxon>
    </lineage>
</organism>